<reference evidence="3" key="1">
    <citation type="journal article" date="2008" name="Toxicon">
        <title>Mass spectrometry analysis, amino acid sequence and biological activity of venom components from the Brazilian scorpion Opisthacanthus cayaporum.</title>
        <authorList>
            <person name="Schwartz E.F."/>
            <person name="Camargos T.S."/>
            <person name="Zamudio F.Z."/>
            <person name="Silva L.P."/>
            <person name="Bloch C. Jr."/>
            <person name="Caixeta F."/>
            <person name="Schwartz C.A."/>
            <person name="Possani L.D."/>
        </authorList>
    </citation>
    <scope>PROTEIN SEQUENCE</scope>
    <scope>SUBCELLULAR LOCATION</scope>
    <scope>TISSUE SPECIFICITY</scope>
    <source>
        <tissue evidence="1">Venom</tissue>
    </source>
</reference>
<evidence type="ECO:0000269" key="1">
    <source>
    </source>
</evidence>
<evidence type="ECO:0000303" key="2">
    <source>
    </source>
</evidence>
<evidence type="ECO:0000305" key="3"/>
<sequence length="13" mass="1605">DNLKKRRRCADDD</sequence>
<keyword id="KW-0903">Direct protein sequencing</keyword>
<keyword id="KW-0964">Secreted</keyword>
<comment type="subcellular location">
    <subcellularLocation>
        <location evidence="1">Secreted</location>
    </subcellularLocation>
</comment>
<comment type="tissue specificity">
    <text evidence="1">Expressed by the venom gland.</text>
</comment>
<protein>
    <recommendedName>
        <fullName>Venom peptide Ocy3</fullName>
    </recommendedName>
</protein>
<proteinExistence type="evidence at protein level"/>
<accession>P86108</accession>
<feature type="peptide" id="PRO_0000398139" description="Venom peptide Ocy3" evidence="1">
    <location>
        <begin position="1"/>
        <end position="13" status="greater than"/>
    </location>
</feature>
<feature type="non-terminal residue" evidence="2">
    <location>
        <position position="13"/>
    </location>
</feature>
<organism>
    <name type="scientific">Opisthacanthus cayaporum</name>
    <name type="common">South American scorpion</name>
    <dbReference type="NCBI Taxonomy" id="573324"/>
    <lineage>
        <taxon>Eukaryota</taxon>
        <taxon>Metazoa</taxon>
        <taxon>Ecdysozoa</taxon>
        <taxon>Arthropoda</taxon>
        <taxon>Chelicerata</taxon>
        <taxon>Arachnida</taxon>
        <taxon>Scorpiones</taxon>
        <taxon>Iurida</taxon>
        <taxon>Scorpionoidea</taxon>
        <taxon>Hemiscorpiidae</taxon>
        <taxon>Opisthacanthus</taxon>
    </lineage>
</organism>
<dbReference type="GO" id="GO:0005576">
    <property type="term" value="C:extracellular region"/>
    <property type="evidence" value="ECO:0007669"/>
    <property type="project" value="UniProtKB-SubCell"/>
</dbReference>
<name>VP03_OPICY</name>